<gene>
    <name evidence="1" type="primary">cysH</name>
    <name type="ordered locus">PD_0714</name>
</gene>
<organism>
    <name type="scientific">Xylella fastidiosa (strain Temecula1 / ATCC 700964)</name>
    <dbReference type="NCBI Taxonomy" id="183190"/>
    <lineage>
        <taxon>Bacteria</taxon>
        <taxon>Pseudomonadati</taxon>
        <taxon>Pseudomonadota</taxon>
        <taxon>Gammaproteobacteria</taxon>
        <taxon>Lysobacterales</taxon>
        <taxon>Lysobacteraceae</taxon>
        <taxon>Xylella</taxon>
    </lineage>
</organism>
<feature type="chain" id="PRO_0000100659" description="Phosphoadenosine 5'-phosphosulfate reductase">
    <location>
        <begin position="1"/>
        <end position="237"/>
    </location>
</feature>
<feature type="active site" description="Nucleophile; cysteine thiosulfonate intermediate" evidence="1">
    <location>
        <position position="231"/>
    </location>
</feature>
<evidence type="ECO:0000255" key="1">
    <source>
        <dbReference type="HAMAP-Rule" id="MF_00063"/>
    </source>
</evidence>
<keyword id="KW-0963">Cytoplasm</keyword>
<keyword id="KW-0560">Oxidoreductase</keyword>
<keyword id="KW-1185">Reference proteome</keyword>
<sequence>MTVLPALPPLDDLETLNVHLETLSAENRVCWALEHGPDHPALSSSFGAQSAVMLHLLTRFAPDITVILVDTGYLFPETYRFADTLTERLKLNLKVYQPLRSGAWTEARHGRLWEQGIDGINQYNTLHKVEPMRRALEELQVGTWFTGLRRGQSSTRTQTSIVQRRDERYKISPIADWTDRDIWEYMKHHDLPYHPLWEQGYVSIGDIHTTRPLEPDMREEDTRFFGFKRECGIHENI</sequence>
<accession>Q87DH1</accession>
<comment type="function">
    <text evidence="1">Catalyzes the formation of sulfite from phosphoadenosine 5'-phosphosulfate (PAPS) using thioredoxin as an electron donor.</text>
</comment>
<comment type="catalytic activity">
    <reaction evidence="1">
        <text>[thioredoxin]-disulfide + sulfite + adenosine 3',5'-bisphosphate + 2 H(+) = [thioredoxin]-dithiol + 3'-phosphoadenylyl sulfate</text>
        <dbReference type="Rhea" id="RHEA:11724"/>
        <dbReference type="Rhea" id="RHEA-COMP:10698"/>
        <dbReference type="Rhea" id="RHEA-COMP:10700"/>
        <dbReference type="ChEBI" id="CHEBI:15378"/>
        <dbReference type="ChEBI" id="CHEBI:17359"/>
        <dbReference type="ChEBI" id="CHEBI:29950"/>
        <dbReference type="ChEBI" id="CHEBI:50058"/>
        <dbReference type="ChEBI" id="CHEBI:58339"/>
        <dbReference type="ChEBI" id="CHEBI:58343"/>
        <dbReference type="EC" id="1.8.4.8"/>
    </reaction>
</comment>
<comment type="pathway">
    <text evidence="1">Sulfur metabolism; hydrogen sulfide biosynthesis; sulfite from sulfate: step 3/3.</text>
</comment>
<comment type="subcellular location">
    <subcellularLocation>
        <location evidence="1">Cytoplasm</location>
    </subcellularLocation>
</comment>
<comment type="similarity">
    <text evidence="1">Belongs to the PAPS reductase family. CysH subfamily.</text>
</comment>
<name>CYSH_XYLFT</name>
<protein>
    <recommendedName>
        <fullName evidence="1">Phosphoadenosine 5'-phosphosulfate reductase</fullName>
        <shortName evidence="1">PAPS reductase</shortName>
        <ecNumber evidence="1">1.8.4.8</ecNumber>
    </recommendedName>
    <alternativeName>
        <fullName evidence="1">3'-phosphoadenylylsulfate reductase</fullName>
    </alternativeName>
    <alternativeName>
        <fullName evidence="1">PAPS reductase, thioredoxin dependent</fullName>
    </alternativeName>
    <alternativeName>
        <fullName evidence="1">PAPS sulfotransferase</fullName>
    </alternativeName>
    <alternativeName>
        <fullName evidence="1">PAdoPS reductase</fullName>
    </alternativeName>
</protein>
<dbReference type="EC" id="1.8.4.8" evidence="1"/>
<dbReference type="EMBL" id="AE009442">
    <property type="protein sequence ID" value="AAO28583.1"/>
    <property type="molecule type" value="Genomic_DNA"/>
</dbReference>
<dbReference type="RefSeq" id="WP_004089016.1">
    <property type="nucleotide sequence ID" value="NC_004556.1"/>
</dbReference>
<dbReference type="SMR" id="Q87DH1"/>
<dbReference type="KEGG" id="xft:PD_0714"/>
<dbReference type="HOGENOM" id="CLU_044089_3_0_6"/>
<dbReference type="UniPathway" id="UPA00140">
    <property type="reaction ID" value="UER00206"/>
</dbReference>
<dbReference type="Proteomes" id="UP000002516">
    <property type="component" value="Chromosome"/>
</dbReference>
<dbReference type="GO" id="GO:0005737">
    <property type="term" value="C:cytoplasm"/>
    <property type="evidence" value="ECO:0007669"/>
    <property type="project" value="UniProtKB-SubCell"/>
</dbReference>
<dbReference type="GO" id="GO:0004604">
    <property type="term" value="F:phosphoadenylyl-sulfate reductase (thioredoxin) activity"/>
    <property type="evidence" value="ECO:0007669"/>
    <property type="project" value="UniProtKB-UniRule"/>
</dbReference>
<dbReference type="GO" id="GO:0070814">
    <property type="term" value="P:hydrogen sulfide biosynthetic process"/>
    <property type="evidence" value="ECO:0007669"/>
    <property type="project" value="UniProtKB-UniRule"/>
</dbReference>
<dbReference type="GO" id="GO:0019379">
    <property type="term" value="P:sulfate assimilation, phosphoadenylyl sulfate reduction by phosphoadenylyl-sulfate reductase (thioredoxin)"/>
    <property type="evidence" value="ECO:0007669"/>
    <property type="project" value="UniProtKB-UniRule"/>
</dbReference>
<dbReference type="CDD" id="cd23945">
    <property type="entry name" value="PAPS_reductase"/>
    <property type="match status" value="1"/>
</dbReference>
<dbReference type="FunFam" id="3.40.50.620:FF:000043">
    <property type="entry name" value="Phosphoadenosine phosphosulfate reductase"/>
    <property type="match status" value="1"/>
</dbReference>
<dbReference type="Gene3D" id="3.40.50.620">
    <property type="entry name" value="HUPs"/>
    <property type="match status" value="1"/>
</dbReference>
<dbReference type="HAMAP" id="MF_00063">
    <property type="entry name" value="CysH"/>
    <property type="match status" value="1"/>
</dbReference>
<dbReference type="InterPro" id="IPR004511">
    <property type="entry name" value="PAPS/APS_Rdtase"/>
</dbReference>
<dbReference type="InterPro" id="IPR002500">
    <property type="entry name" value="PAPS_reduct_dom"/>
</dbReference>
<dbReference type="InterPro" id="IPR011800">
    <property type="entry name" value="PAPS_reductase_CysH"/>
</dbReference>
<dbReference type="InterPro" id="IPR014729">
    <property type="entry name" value="Rossmann-like_a/b/a_fold"/>
</dbReference>
<dbReference type="NCBIfam" id="TIGR00434">
    <property type="entry name" value="cysH"/>
    <property type="match status" value="1"/>
</dbReference>
<dbReference type="NCBIfam" id="TIGR02057">
    <property type="entry name" value="PAPS_reductase"/>
    <property type="match status" value="1"/>
</dbReference>
<dbReference type="NCBIfam" id="NF002537">
    <property type="entry name" value="PRK02090.1"/>
    <property type="match status" value="1"/>
</dbReference>
<dbReference type="PANTHER" id="PTHR46509">
    <property type="entry name" value="PHOSPHOADENOSINE PHOSPHOSULFATE REDUCTASE"/>
    <property type="match status" value="1"/>
</dbReference>
<dbReference type="PANTHER" id="PTHR46509:SF1">
    <property type="entry name" value="PHOSPHOADENOSINE PHOSPHOSULFATE REDUCTASE"/>
    <property type="match status" value="1"/>
</dbReference>
<dbReference type="Pfam" id="PF01507">
    <property type="entry name" value="PAPS_reduct"/>
    <property type="match status" value="1"/>
</dbReference>
<dbReference type="PIRSF" id="PIRSF000857">
    <property type="entry name" value="PAPS_reductase"/>
    <property type="match status" value="1"/>
</dbReference>
<dbReference type="SUPFAM" id="SSF52402">
    <property type="entry name" value="Adenine nucleotide alpha hydrolases-like"/>
    <property type="match status" value="1"/>
</dbReference>
<proteinExistence type="inferred from homology"/>
<reference key="1">
    <citation type="journal article" date="2003" name="J. Bacteriol.">
        <title>Comparative analyses of the complete genome sequences of Pierce's disease and citrus variegated chlorosis strains of Xylella fastidiosa.</title>
        <authorList>
            <person name="Van Sluys M.A."/>
            <person name="de Oliveira M.C."/>
            <person name="Monteiro-Vitorello C.B."/>
            <person name="Miyaki C.Y."/>
            <person name="Furlan L.R."/>
            <person name="Camargo L.E.A."/>
            <person name="da Silva A.C.R."/>
            <person name="Moon D.H."/>
            <person name="Takita M.A."/>
            <person name="Lemos E.G.M."/>
            <person name="Machado M.A."/>
            <person name="Ferro M.I.T."/>
            <person name="da Silva F.R."/>
            <person name="Goldman M.H.S."/>
            <person name="Goldman G.H."/>
            <person name="Lemos M.V.F."/>
            <person name="El-Dorry H."/>
            <person name="Tsai S.M."/>
            <person name="Carrer H."/>
            <person name="Carraro D.M."/>
            <person name="de Oliveira R.C."/>
            <person name="Nunes L.R."/>
            <person name="Siqueira W.J."/>
            <person name="Coutinho L.L."/>
            <person name="Kimura E.T."/>
            <person name="Ferro E.S."/>
            <person name="Harakava R."/>
            <person name="Kuramae E.E."/>
            <person name="Marino C.L."/>
            <person name="Giglioti E."/>
            <person name="Abreu I.L."/>
            <person name="Alves L.M.C."/>
            <person name="do Amaral A.M."/>
            <person name="Baia G.S."/>
            <person name="Blanco S.R."/>
            <person name="Brito M.S."/>
            <person name="Cannavan F.S."/>
            <person name="Celestino A.V."/>
            <person name="da Cunha A.F."/>
            <person name="Fenille R.C."/>
            <person name="Ferro J.A."/>
            <person name="Formighieri E.F."/>
            <person name="Kishi L.T."/>
            <person name="Leoni S.G."/>
            <person name="Oliveira A.R."/>
            <person name="Rosa V.E. Jr."/>
            <person name="Sassaki F.T."/>
            <person name="Sena J.A.D."/>
            <person name="de Souza A.A."/>
            <person name="Truffi D."/>
            <person name="Tsukumo F."/>
            <person name="Yanai G.M."/>
            <person name="Zaros L.G."/>
            <person name="Civerolo E.L."/>
            <person name="Simpson A.J.G."/>
            <person name="Almeida N.F. Jr."/>
            <person name="Setubal J.C."/>
            <person name="Kitajima J.P."/>
        </authorList>
    </citation>
    <scope>NUCLEOTIDE SEQUENCE [LARGE SCALE GENOMIC DNA]</scope>
    <source>
        <strain>Temecula1 / ATCC 700964</strain>
    </source>
</reference>